<dbReference type="EMBL" id="X01115">
    <property type="protein sequence ID" value="CAA25585.1"/>
    <property type="molecule type" value="mRNA"/>
</dbReference>
<dbReference type="EMBL" id="M11904">
    <property type="protein sequence ID" value="AAA42191.1"/>
    <property type="molecule type" value="Genomic_DNA"/>
</dbReference>
<dbReference type="PIR" id="S07364">
    <property type="entry name" value="S07364"/>
</dbReference>
<dbReference type="RefSeq" id="NP_598200.1">
    <property type="nucleotide sequence ID" value="NM_133516.2"/>
</dbReference>
<dbReference type="RefSeq" id="XP_008772095.1">
    <property type="nucleotide sequence ID" value="XM_008773873.1"/>
</dbReference>
<dbReference type="STRING" id="10116.ENSRNOP00000018537"/>
<dbReference type="PhosphoSitePlus" id="P04812"/>
<dbReference type="PaxDb" id="10116-ENSRNOP00000018537"/>
<dbReference type="GeneID" id="171027"/>
<dbReference type="KEGG" id="rno:171027"/>
<dbReference type="UCSC" id="RGD:620290">
    <property type="organism name" value="rat"/>
</dbReference>
<dbReference type="AGR" id="RGD:620290"/>
<dbReference type="CTD" id="20944"/>
<dbReference type="RGD" id="620290">
    <property type="gene designation" value="Svs5"/>
</dbReference>
<dbReference type="InParanoid" id="P04812"/>
<dbReference type="OrthoDB" id="9634879at2759"/>
<dbReference type="TreeFam" id="TF353660"/>
<dbReference type="PRO" id="PR:P04812"/>
<dbReference type="Proteomes" id="UP000002494">
    <property type="component" value="Unplaced"/>
</dbReference>
<dbReference type="GO" id="GO:0005615">
    <property type="term" value="C:extracellular space"/>
    <property type="evidence" value="ECO:0000318"/>
    <property type="project" value="GO_Central"/>
</dbReference>
<dbReference type="InterPro" id="IPR035409">
    <property type="entry name" value="Svs4/5/6"/>
</dbReference>
<dbReference type="PANTHER" id="PTHR17498:SF3">
    <property type="entry name" value="SEMINAL VESICLE SECRETORY PROTEIN 5"/>
    <property type="match status" value="1"/>
</dbReference>
<dbReference type="PANTHER" id="PTHR17498">
    <property type="entry name" value="SEMINAL VESICLE SECRETORY PROTEIN 6-RELATED"/>
    <property type="match status" value="1"/>
</dbReference>
<dbReference type="Pfam" id="PF17381">
    <property type="entry name" value="Svs_4_5_6"/>
    <property type="match status" value="1"/>
</dbReference>
<name>SVS5_RAT</name>
<organism>
    <name type="scientific">Rattus norvegicus</name>
    <name type="common">Rat</name>
    <dbReference type="NCBI Taxonomy" id="10116"/>
    <lineage>
        <taxon>Eukaryota</taxon>
        <taxon>Metazoa</taxon>
        <taxon>Chordata</taxon>
        <taxon>Craniata</taxon>
        <taxon>Vertebrata</taxon>
        <taxon>Euteleostomi</taxon>
        <taxon>Mammalia</taxon>
        <taxon>Eutheria</taxon>
        <taxon>Euarchontoglires</taxon>
        <taxon>Glires</taxon>
        <taxon>Rodentia</taxon>
        <taxon>Myomorpha</taxon>
        <taxon>Muroidea</taxon>
        <taxon>Muridae</taxon>
        <taxon>Murinae</taxon>
        <taxon>Rattus</taxon>
    </lineage>
</organism>
<protein>
    <recommendedName>
        <fullName>Seminal vesicle secretory protein 5</fullName>
    </recommendedName>
    <alternativeName>
        <fullName>SVS protein F</fullName>
    </alternativeName>
    <alternativeName>
        <fullName>Seminal vesicle secretory protein V</fullName>
        <shortName>SVS V</shortName>
    </alternativeName>
</protein>
<keyword id="KW-1185">Reference proteome</keyword>
<keyword id="KW-0964">Secreted</keyword>
<keyword id="KW-0732">Signal</keyword>
<sequence>MSPTGFFLLTVLLVLVTEAASRGPREKFSQSAEDPYSENMNLKILASGRGSSSTFGAFSRSENSRSNFKSKSPSSITREKVNEESRSEMSSTSSHFGLKMRRSHGGGEMNPFETKVKTRITRK</sequence>
<evidence type="ECO:0000256" key="1">
    <source>
        <dbReference type="SAM" id="MobiDB-lite"/>
    </source>
</evidence>
<evidence type="ECO:0000305" key="2"/>
<accession>P04812</accession>
<feature type="signal peptide">
    <location>
        <begin position="1"/>
        <end position="21"/>
    </location>
</feature>
<feature type="chain" id="PRO_0000022455" description="Seminal vesicle secretory protein 5">
    <location>
        <begin position="22"/>
        <end position="123"/>
    </location>
</feature>
<feature type="region of interest" description="Disordered" evidence="1">
    <location>
        <begin position="50"/>
        <end position="123"/>
    </location>
</feature>
<feature type="compositionally biased region" description="Low complexity" evidence="1">
    <location>
        <begin position="64"/>
        <end position="75"/>
    </location>
</feature>
<feature type="compositionally biased region" description="Basic and acidic residues" evidence="1">
    <location>
        <begin position="77"/>
        <end position="87"/>
    </location>
</feature>
<feature type="sequence conflict" description="In Ref. 2; CAA25585." evidence="2" ref="2">
    <original>F</original>
    <variation>Y</variation>
    <location>
        <position position="58"/>
    </location>
</feature>
<gene>
    <name type="primary">Svs5</name>
    <name type="synonym">Svp5</name>
</gene>
<reference key="1">
    <citation type="journal article" date="1985" name="Nucleic Acids Res.">
        <title>Sequence organisation of rat seminal vesicle F gene: location of transcriptional start point and sequence comparison with six other androgen-regulated genes.</title>
        <authorList>
            <person name="Williams L."/>
            <person name="McDonald C.J."/>
            <person name="Higgins S.J."/>
        </authorList>
    </citation>
    <scope>NUCLEOTIDE SEQUENCE [GENOMIC DNA]</scope>
</reference>
<reference key="2">
    <citation type="journal article" date="1984" name="EMBO J.">
        <title>Divergent protein coding regions in otherwise closely related androgen-regulated mRNAs.</title>
        <authorList>
            <person name="McDonald C.J."/>
            <person name="Eliopoulos E."/>
            <person name="Higgins S.J."/>
        </authorList>
    </citation>
    <scope>NUCLEOTIDE SEQUENCE [MRNA]</scope>
</reference>
<proteinExistence type="evidence at transcript level"/>
<comment type="subcellular location">
    <subcellularLocation>
        <location>Secreted</location>
        <location>Extracellular space</location>
    </subcellularLocation>
</comment>
<comment type="tissue specificity">
    <text>Testis.</text>
</comment>
<comment type="induction">
    <text>By testosterone.</text>
</comment>
<comment type="similarity">
    <text evidence="2">Belongs to the SVP2/SVP5/SVP6 family.</text>
</comment>